<evidence type="ECO:0000255" key="1">
    <source>
        <dbReference type="HAMAP-Rule" id="MF_00340"/>
    </source>
</evidence>
<evidence type="ECO:0000256" key="2">
    <source>
        <dbReference type="SAM" id="MobiDB-lite"/>
    </source>
</evidence>
<evidence type="ECO:0000305" key="3"/>
<protein>
    <recommendedName>
        <fullName evidence="1">Large ribosomal subunit protein bL32</fullName>
    </recommendedName>
    <alternativeName>
        <fullName evidence="3">50S ribosomal protein L32</fullName>
    </alternativeName>
</protein>
<comment type="similarity">
    <text evidence="1">Belongs to the bacterial ribosomal protein bL32 family.</text>
</comment>
<keyword id="KW-1185">Reference proteome</keyword>
<keyword id="KW-0687">Ribonucleoprotein</keyword>
<keyword id="KW-0689">Ribosomal protein</keyword>
<accession>A8FWL2</accession>
<dbReference type="EMBL" id="CP000821">
    <property type="protein sequence ID" value="ABV37235.1"/>
    <property type="molecule type" value="Genomic_DNA"/>
</dbReference>
<dbReference type="RefSeq" id="WP_012142966.1">
    <property type="nucleotide sequence ID" value="NC_009831.1"/>
</dbReference>
<dbReference type="SMR" id="A8FWL2"/>
<dbReference type="STRING" id="425104.Ssed_2628"/>
<dbReference type="KEGG" id="sse:Ssed_2628"/>
<dbReference type="eggNOG" id="COG0333">
    <property type="taxonomic scope" value="Bacteria"/>
</dbReference>
<dbReference type="HOGENOM" id="CLU_129084_2_1_6"/>
<dbReference type="OrthoDB" id="9801927at2"/>
<dbReference type="Proteomes" id="UP000002015">
    <property type="component" value="Chromosome"/>
</dbReference>
<dbReference type="GO" id="GO:0015934">
    <property type="term" value="C:large ribosomal subunit"/>
    <property type="evidence" value="ECO:0007669"/>
    <property type="project" value="InterPro"/>
</dbReference>
<dbReference type="GO" id="GO:0003735">
    <property type="term" value="F:structural constituent of ribosome"/>
    <property type="evidence" value="ECO:0007669"/>
    <property type="project" value="InterPro"/>
</dbReference>
<dbReference type="GO" id="GO:0006412">
    <property type="term" value="P:translation"/>
    <property type="evidence" value="ECO:0007669"/>
    <property type="project" value="UniProtKB-UniRule"/>
</dbReference>
<dbReference type="HAMAP" id="MF_00340">
    <property type="entry name" value="Ribosomal_bL32"/>
    <property type="match status" value="1"/>
</dbReference>
<dbReference type="InterPro" id="IPR002677">
    <property type="entry name" value="Ribosomal_bL32"/>
</dbReference>
<dbReference type="InterPro" id="IPR044957">
    <property type="entry name" value="Ribosomal_bL32_bact"/>
</dbReference>
<dbReference type="InterPro" id="IPR011332">
    <property type="entry name" value="Ribosomal_zn-bd"/>
</dbReference>
<dbReference type="NCBIfam" id="TIGR01031">
    <property type="entry name" value="rpmF_bact"/>
    <property type="match status" value="1"/>
</dbReference>
<dbReference type="PANTHER" id="PTHR35534">
    <property type="entry name" value="50S RIBOSOMAL PROTEIN L32"/>
    <property type="match status" value="1"/>
</dbReference>
<dbReference type="PANTHER" id="PTHR35534:SF1">
    <property type="entry name" value="LARGE RIBOSOMAL SUBUNIT PROTEIN BL32"/>
    <property type="match status" value="1"/>
</dbReference>
<dbReference type="Pfam" id="PF01783">
    <property type="entry name" value="Ribosomal_L32p"/>
    <property type="match status" value="1"/>
</dbReference>
<dbReference type="SUPFAM" id="SSF57829">
    <property type="entry name" value="Zn-binding ribosomal proteins"/>
    <property type="match status" value="1"/>
</dbReference>
<name>RL32_SHESH</name>
<reference key="1">
    <citation type="submission" date="2007-08" db="EMBL/GenBank/DDBJ databases">
        <title>Complete sequence of Shewanella sediminis HAW-EB3.</title>
        <authorList>
            <consortium name="US DOE Joint Genome Institute"/>
            <person name="Copeland A."/>
            <person name="Lucas S."/>
            <person name="Lapidus A."/>
            <person name="Barry K."/>
            <person name="Glavina del Rio T."/>
            <person name="Dalin E."/>
            <person name="Tice H."/>
            <person name="Pitluck S."/>
            <person name="Chertkov O."/>
            <person name="Brettin T."/>
            <person name="Bruce D."/>
            <person name="Detter J.C."/>
            <person name="Han C."/>
            <person name="Schmutz J."/>
            <person name="Larimer F."/>
            <person name="Land M."/>
            <person name="Hauser L."/>
            <person name="Kyrpides N."/>
            <person name="Kim E."/>
            <person name="Zhao J.-S."/>
            <person name="Richardson P."/>
        </authorList>
    </citation>
    <scope>NUCLEOTIDE SEQUENCE [LARGE SCALE GENOMIC DNA]</scope>
    <source>
        <strain>HAW-EB3</strain>
    </source>
</reference>
<gene>
    <name evidence="1" type="primary">rpmF</name>
    <name type="ordered locus">Ssed_2628</name>
</gene>
<organism>
    <name type="scientific">Shewanella sediminis (strain HAW-EB3)</name>
    <dbReference type="NCBI Taxonomy" id="425104"/>
    <lineage>
        <taxon>Bacteria</taxon>
        <taxon>Pseudomonadati</taxon>
        <taxon>Pseudomonadota</taxon>
        <taxon>Gammaproteobacteria</taxon>
        <taxon>Alteromonadales</taxon>
        <taxon>Shewanellaceae</taxon>
        <taxon>Shewanella</taxon>
    </lineage>
</organism>
<feature type="chain" id="PRO_1000079346" description="Large ribosomal subunit protein bL32">
    <location>
        <begin position="1"/>
        <end position="56"/>
    </location>
</feature>
<feature type="region of interest" description="Disordered" evidence="2">
    <location>
        <begin position="1"/>
        <end position="36"/>
    </location>
</feature>
<feature type="compositionally biased region" description="Basic residues" evidence="2">
    <location>
        <begin position="1"/>
        <end position="16"/>
    </location>
</feature>
<feature type="compositionally biased region" description="Polar residues" evidence="2">
    <location>
        <begin position="21"/>
        <end position="34"/>
    </location>
</feature>
<proteinExistence type="inferred from homology"/>
<sequence length="56" mass="6339">MAVQKNKKSRSKRGMRRSHDSLSTPQLSVDSTSGELHLRHNVTADGFYRGQKVINK</sequence>